<organism>
    <name type="scientific">Rhyparobia maderae</name>
    <name type="common">Madeira cockroach</name>
    <name type="synonym">Leucophaea maderae</name>
    <dbReference type="NCBI Taxonomy" id="36963"/>
    <lineage>
        <taxon>Eukaryota</taxon>
        <taxon>Metazoa</taxon>
        <taxon>Ecdysozoa</taxon>
        <taxon>Arthropoda</taxon>
        <taxon>Hexapoda</taxon>
        <taxon>Insecta</taxon>
        <taxon>Pterygota</taxon>
        <taxon>Neoptera</taxon>
        <taxon>Polyneoptera</taxon>
        <taxon>Dictyoptera</taxon>
        <taxon>Blattodea</taxon>
        <taxon>Blaberoidea</taxon>
        <taxon>Blaberidae</taxon>
        <taxon>Oxyhaloinae</taxon>
        <taxon>Rhyparobia</taxon>
    </lineage>
</organism>
<dbReference type="GO" id="GO:0005576">
    <property type="term" value="C:extracellular region"/>
    <property type="evidence" value="ECO:0007669"/>
    <property type="project" value="UniProtKB-SubCell"/>
</dbReference>
<dbReference type="GO" id="GO:0007218">
    <property type="term" value="P:neuropeptide signaling pathway"/>
    <property type="evidence" value="ECO:0007669"/>
    <property type="project" value="UniProtKB-KW"/>
</dbReference>
<dbReference type="InterPro" id="IPR013206">
    <property type="entry name" value="Lem_TRP"/>
</dbReference>
<dbReference type="Pfam" id="PF08262">
    <property type="entry name" value="Lem_TRP"/>
    <property type="match status" value="1"/>
</dbReference>
<protein>
    <recommendedName>
        <fullName>Tachykinin-related peptide 9</fullName>
        <shortName>LemTRP 9</shortName>
    </recommendedName>
</protein>
<comment type="function">
    <text>Myoactive peptide. Increases the amplitude and frequency of spontaneous contractions and tonus of hindgut muscle.</text>
</comment>
<comment type="subcellular location">
    <subcellularLocation>
        <location>Secreted</location>
    </subcellularLocation>
</comment>
<comment type="tissue specificity">
    <text>Brain.</text>
</comment>
<comment type="mass spectrometry" mass="1081.5" method="MALDI" evidence="1"/>
<feature type="peptide" id="PRO_0000044444" description="Tachykinin-related peptide 9">
    <location>
        <begin position="1"/>
        <end position="10"/>
    </location>
</feature>
<feature type="modified residue" description="Arginine amide" evidence="1">
    <location>
        <position position="10"/>
    </location>
</feature>
<keyword id="KW-0027">Amidation</keyword>
<keyword id="KW-0903">Direct protein sequencing</keyword>
<keyword id="KW-0527">Neuropeptide</keyword>
<keyword id="KW-0964">Secreted</keyword>
<name>TRP9_RHYMA</name>
<reference key="1">
    <citation type="journal article" date="1997" name="Peptides">
        <title>Seven tachykinin-related peptides isolated from the brain of the madeira cockroach; evidence for tissue-specific expression of isoforms.</title>
        <authorList>
            <person name="Muren J.E."/>
            <person name="Naessel D.R."/>
        </authorList>
    </citation>
    <scope>PROTEIN SEQUENCE</scope>
    <scope>AMIDATION AT ARG-10</scope>
    <scope>MASS SPECTROMETRY</scope>
    <source>
        <tissue>Brain</tissue>
    </source>
</reference>
<proteinExistence type="evidence at protein level"/>
<evidence type="ECO:0000269" key="1">
    <source>
    </source>
</evidence>
<accession>P81741</accession>
<sequence length="10" mass="1081">APSMGFQGMR</sequence>